<gene>
    <name type="primary">RNASE1</name>
    <name type="synonym">RNS1</name>
</gene>
<feature type="chain" id="PRO_0000057195" description="Ribonuclease pancreatic">
    <location>
        <begin position="1"/>
        <end position="124"/>
    </location>
</feature>
<feature type="active site" description="Proton acceptor">
    <location>
        <position position="12"/>
    </location>
</feature>
<feature type="active site" description="Proton donor">
    <location>
        <position position="119"/>
    </location>
</feature>
<feature type="binding site" evidence="1">
    <location>
        <position position="7"/>
    </location>
    <ligand>
        <name>substrate</name>
    </ligand>
</feature>
<feature type="binding site" evidence="1">
    <location>
        <position position="10"/>
    </location>
    <ligand>
        <name>substrate</name>
    </ligand>
</feature>
<feature type="binding site">
    <location>
        <begin position="41"/>
        <end position="45"/>
    </location>
    <ligand>
        <name>substrate</name>
    </ligand>
</feature>
<feature type="binding site" evidence="1">
    <location>
        <position position="66"/>
    </location>
    <ligand>
        <name>substrate</name>
    </ligand>
</feature>
<feature type="binding site" evidence="1">
    <location>
        <position position="85"/>
    </location>
    <ligand>
        <name>substrate</name>
    </ligand>
</feature>
<feature type="glycosylation site" description="N-linked (GlcNAc...) asparagine; partial" evidence="2">
    <location>
        <position position="34"/>
    </location>
</feature>
<feature type="disulfide bond">
    <location>
        <begin position="26"/>
        <end position="84"/>
    </location>
</feature>
<feature type="disulfide bond">
    <location>
        <begin position="40"/>
        <end position="95"/>
    </location>
</feature>
<feature type="disulfide bond">
    <location>
        <begin position="58"/>
        <end position="110"/>
    </location>
</feature>
<feature type="disulfide bond">
    <location>
        <begin position="65"/>
        <end position="72"/>
    </location>
</feature>
<keyword id="KW-0903">Direct protein sequencing</keyword>
<keyword id="KW-1015">Disulfide bond</keyword>
<keyword id="KW-0255">Endonuclease</keyword>
<keyword id="KW-0325">Glycoprotein</keyword>
<keyword id="KW-0378">Hydrolase</keyword>
<keyword id="KW-0456">Lyase</keyword>
<keyword id="KW-0540">Nuclease</keyword>
<keyword id="KW-0964">Secreted</keyword>
<evidence type="ECO:0000250" key="1"/>
<evidence type="ECO:0000269" key="2">
    <source>
    </source>
</evidence>
<evidence type="ECO:0000305" key="3"/>
<accession>P00659</accession>
<comment type="function">
    <text evidence="1">Endonuclease that catalyzes the cleavage of RNA on the 3' side of pyrimidine nucleotides. Acts on single-stranded and double-stranded RNA (By similarity).</text>
</comment>
<comment type="catalytic activity">
    <reaction>
        <text>an [RNA] containing cytidine + H2O = an [RNA]-3'-cytidine-3'-phosphate + a 5'-hydroxy-ribonucleotide-3'-[RNA].</text>
        <dbReference type="EC" id="4.6.1.18"/>
    </reaction>
</comment>
<comment type="catalytic activity">
    <reaction>
        <text>an [RNA] containing uridine + H2O = an [RNA]-3'-uridine-3'-phosphate + a 5'-hydroxy-ribonucleotide-3'-[RNA].</text>
        <dbReference type="EC" id="4.6.1.18"/>
    </reaction>
</comment>
<comment type="subunit">
    <text evidence="1">Monomer. Interacts with and forms tight 1:1 complexes with RNH1. Dimerization of two such complexes may occur. Interaction with RNH1 inhibits this protein (By similarity).</text>
</comment>
<comment type="subcellular location">
    <subcellularLocation>
        <location>Secreted</location>
    </subcellularLocation>
</comment>
<comment type="tissue specificity">
    <text>Pancreas.</text>
</comment>
<comment type="similarity">
    <text evidence="3">Belongs to the pancreatic ribonuclease family.</text>
</comment>
<dbReference type="EC" id="4.6.1.18"/>
<dbReference type="PIR" id="A00807">
    <property type="entry name" value="NRANT"/>
</dbReference>
<dbReference type="GlyCosmos" id="P00659">
    <property type="glycosylation" value="1 site, No reported glycans"/>
</dbReference>
<dbReference type="iPTMnet" id="P00659"/>
<dbReference type="GO" id="GO:0005576">
    <property type="term" value="C:extracellular region"/>
    <property type="evidence" value="ECO:0007669"/>
    <property type="project" value="UniProtKB-SubCell"/>
</dbReference>
<dbReference type="GO" id="GO:0016829">
    <property type="term" value="F:lyase activity"/>
    <property type="evidence" value="ECO:0007669"/>
    <property type="project" value="UniProtKB-KW"/>
</dbReference>
<dbReference type="GO" id="GO:0003676">
    <property type="term" value="F:nucleic acid binding"/>
    <property type="evidence" value="ECO:0007669"/>
    <property type="project" value="InterPro"/>
</dbReference>
<dbReference type="GO" id="GO:0004522">
    <property type="term" value="F:ribonuclease A activity"/>
    <property type="evidence" value="ECO:0007669"/>
    <property type="project" value="UniProtKB-EC"/>
</dbReference>
<dbReference type="GO" id="GO:0050830">
    <property type="term" value="P:defense response to Gram-positive bacterium"/>
    <property type="evidence" value="ECO:0007669"/>
    <property type="project" value="TreeGrafter"/>
</dbReference>
<dbReference type="CDD" id="cd06265">
    <property type="entry name" value="RNase_A_canonical"/>
    <property type="match status" value="1"/>
</dbReference>
<dbReference type="FunFam" id="3.10.130.10:FF:000001">
    <property type="entry name" value="Ribonuclease pancreatic"/>
    <property type="match status" value="1"/>
</dbReference>
<dbReference type="Gene3D" id="3.10.130.10">
    <property type="entry name" value="Ribonuclease A-like domain"/>
    <property type="match status" value="1"/>
</dbReference>
<dbReference type="InterPro" id="IPR001427">
    <property type="entry name" value="RNaseA"/>
</dbReference>
<dbReference type="InterPro" id="IPR036816">
    <property type="entry name" value="RNaseA-like_dom_sf"/>
</dbReference>
<dbReference type="InterPro" id="IPR023411">
    <property type="entry name" value="RNaseA_AS"/>
</dbReference>
<dbReference type="InterPro" id="IPR023412">
    <property type="entry name" value="RNaseA_domain"/>
</dbReference>
<dbReference type="PANTHER" id="PTHR11437">
    <property type="entry name" value="RIBONUCLEASE"/>
    <property type="match status" value="1"/>
</dbReference>
<dbReference type="PANTHER" id="PTHR11437:SF24">
    <property type="entry name" value="RIBONUCLEASE PANCREATIC"/>
    <property type="match status" value="1"/>
</dbReference>
<dbReference type="Pfam" id="PF00074">
    <property type="entry name" value="RnaseA"/>
    <property type="match status" value="1"/>
</dbReference>
<dbReference type="PRINTS" id="PR00794">
    <property type="entry name" value="RIBONUCLEASE"/>
</dbReference>
<dbReference type="SMART" id="SM00092">
    <property type="entry name" value="RNAse_Pc"/>
    <property type="match status" value="1"/>
</dbReference>
<dbReference type="SUPFAM" id="SSF54076">
    <property type="entry name" value="RNase A-like"/>
    <property type="match status" value="1"/>
</dbReference>
<dbReference type="PROSITE" id="PS00127">
    <property type="entry name" value="RNASE_PANCREATIC"/>
    <property type="match status" value="1"/>
</dbReference>
<name>RNAS1_DAMKO</name>
<proteinExistence type="evidence at protein level"/>
<reference key="1">
    <citation type="journal article" date="1976" name="Biochim. Biophys. Acta">
        <title>The amino acid sequence of topi pancreatic ribonuclease.</title>
        <authorList>
            <person name="Kuper H."/>
            <person name="Beintema J.J."/>
        </authorList>
    </citation>
    <scope>PARTIAL PROTEIN SEQUENCE</scope>
    <scope>GLYCOSYLATION AT ASN-34</scope>
</reference>
<organism>
    <name type="scientific">Damaliscus korrigum</name>
    <name type="common">Topi</name>
    <name type="synonym">Damaliscus lunatus korrigum</name>
    <dbReference type="NCBI Taxonomy" id="9930"/>
    <lineage>
        <taxon>Eukaryota</taxon>
        <taxon>Metazoa</taxon>
        <taxon>Chordata</taxon>
        <taxon>Craniata</taxon>
        <taxon>Vertebrata</taxon>
        <taxon>Euteleostomi</taxon>
        <taxon>Mammalia</taxon>
        <taxon>Eutheria</taxon>
        <taxon>Laurasiatheria</taxon>
        <taxon>Artiodactyla</taxon>
        <taxon>Ruminantia</taxon>
        <taxon>Pecora</taxon>
        <taxon>Bovidae</taxon>
        <taxon>Alcelaphinae</taxon>
        <taxon>Damaliscus</taxon>
    </lineage>
</organism>
<protein>
    <recommendedName>
        <fullName>Ribonuclease pancreatic</fullName>
        <ecNumber>4.6.1.18</ecNumber>
    </recommendedName>
    <alternativeName>
        <fullName>RNase 1</fullName>
    </alternativeName>
    <alternativeName>
        <fullName>RNase A</fullName>
    </alternativeName>
</protein>
<sequence>KESAAAKFZRZHMBSSTSSASSSBYCBZMMKSRNLTQDRCKPVBTFVHZSLABVZAVCSZKBVACKBGZTBCYZSYSTMSITBCRZTGSSKYPBCAYKTTQAKKHIIVACZGBPYVPVHFBASV</sequence>